<accession>Q0AJF3</accession>
<evidence type="ECO:0000255" key="1">
    <source>
        <dbReference type="HAMAP-Rule" id="MF_00321"/>
    </source>
</evidence>
<gene>
    <name evidence="1" type="primary">engB</name>
    <name type="ordered locus">Neut_0234</name>
</gene>
<comment type="function">
    <text evidence="1">Necessary for normal cell division and for the maintenance of normal septation.</text>
</comment>
<comment type="cofactor">
    <cofactor evidence="1">
        <name>Mg(2+)</name>
        <dbReference type="ChEBI" id="CHEBI:18420"/>
    </cofactor>
</comment>
<comment type="similarity">
    <text evidence="1">Belongs to the TRAFAC class TrmE-Era-EngA-EngB-Septin-like GTPase superfamily. EngB GTPase family.</text>
</comment>
<protein>
    <recommendedName>
        <fullName evidence="1">Probable GTP-binding protein EngB</fullName>
    </recommendedName>
</protein>
<proteinExistence type="inferred from homology"/>
<keyword id="KW-0131">Cell cycle</keyword>
<keyword id="KW-0132">Cell division</keyword>
<keyword id="KW-0342">GTP-binding</keyword>
<keyword id="KW-0460">Magnesium</keyword>
<keyword id="KW-0479">Metal-binding</keyword>
<keyword id="KW-0547">Nucleotide-binding</keyword>
<keyword id="KW-0717">Septation</keyword>
<dbReference type="EMBL" id="CP000450">
    <property type="protein sequence ID" value="ABI58518.1"/>
    <property type="molecule type" value="Genomic_DNA"/>
</dbReference>
<dbReference type="RefSeq" id="WP_011633362.1">
    <property type="nucleotide sequence ID" value="NC_008344.1"/>
</dbReference>
<dbReference type="SMR" id="Q0AJF3"/>
<dbReference type="STRING" id="335283.Neut_0234"/>
<dbReference type="KEGG" id="net:Neut_0234"/>
<dbReference type="eggNOG" id="COG0218">
    <property type="taxonomic scope" value="Bacteria"/>
</dbReference>
<dbReference type="HOGENOM" id="CLU_033732_1_0_4"/>
<dbReference type="OrthoDB" id="9804921at2"/>
<dbReference type="Proteomes" id="UP000001966">
    <property type="component" value="Chromosome"/>
</dbReference>
<dbReference type="GO" id="GO:0005829">
    <property type="term" value="C:cytosol"/>
    <property type="evidence" value="ECO:0007669"/>
    <property type="project" value="TreeGrafter"/>
</dbReference>
<dbReference type="GO" id="GO:0005525">
    <property type="term" value="F:GTP binding"/>
    <property type="evidence" value="ECO:0007669"/>
    <property type="project" value="UniProtKB-UniRule"/>
</dbReference>
<dbReference type="GO" id="GO:0046872">
    <property type="term" value="F:metal ion binding"/>
    <property type="evidence" value="ECO:0007669"/>
    <property type="project" value="UniProtKB-KW"/>
</dbReference>
<dbReference type="GO" id="GO:0000917">
    <property type="term" value="P:division septum assembly"/>
    <property type="evidence" value="ECO:0007669"/>
    <property type="project" value="UniProtKB-KW"/>
</dbReference>
<dbReference type="CDD" id="cd01876">
    <property type="entry name" value="YihA_EngB"/>
    <property type="match status" value="1"/>
</dbReference>
<dbReference type="FunFam" id="3.40.50.300:FF:000098">
    <property type="entry name" value="Probable GTP-binding protein EngB"/>
    <property type="match status" value="1"/>
</dbReference>
<dbReference type="Gene3D" id="3.40.50.300">
    <property type="entry name" value="P-loop containing nucleotide triphosphate hydrolases"/>
    <property type="match status" value="1"/>
</dbReference>
<dbReference type="HAMAP" id="MF_00321">
    <property type="entry name" value="GTPase_EngB"/>
    <property type="match status" value="1"/>
</dbReference>
<dbReference type="InterPro" id="IPR030393">
    <property type="entry name" value="G_ENGB_dom"/>
</dbReference>
<dbReference type="InterPro" id="IPR006073">
    <property type="entry name" value="GTP-bd"/>
</dbReference>
<dbReference type="InterPro" id="IPR019987">
    <property type="entry name" value="GTP-bd_ribosome_bio_YsxC"/>
</dbReference>
<dbReference type="InterPro" id="IPR027417">
    <property type="entry name" value="P-loop_NTPase"/>
</dbReference>
<dbReference type="NCBIfam" id="TIGR03598">
    <property type="entry name" value="GTPase_YsxC"/>
    <property type="match status" value="1"/>
</dbReference>
<dbReference type="PANTHER" id="PTHR11649:SF13">
    <property type="entry name" value="ENGB-TYPE G DOMAIN-CONTAINING PROTEIN"/>
    <property type="match status" value="1"/>
</dbReference>
<dbReference type="PANTHER" id="PTHR11649">
    <property type="entry name" value="MSS1/TRME-RELATED GTP-BINDING PROTEIN"/>
    <property type="match status" value="1"/>
</dbReference>
<dbReference type="Pfam" id="PF01926">
    <property type="entry name" value="MMR_HSR1"/>
    <property type="match status" value="1"/>
</dbReference>
<dbReference type="SUPFAM" id="SSF52540">
    <property type="entry name" value="P-loop containing nucleoside triphosphate hydrolases"/>
    <property type="match status" value="1"/>
</dbReference>
<dbReference type="PROSITE" id="PS51706">
    <property type="entry name" value="G_ENGB"/>
    <property type="match status" value="1"/>
</dbReference>
<name>ENGB_NITEC</name>
<organism>
    <name type="scientific">Nitrosomonas eutropha (strain DSM 101675 / C91 / Nm57)</name>
    <dbReference type="NCBI Taxonomy" id="335283"/>
    <lineage>
        <taxon>Bacteria</taxon>
        <taxon>Pseudomonadati</taxon>
        <taxon>Pseudomonadota</taxon>
        <taxon>Betaproteobacteria</taxon>
        <taxon>Nitrosomonadales</taxon>
        <taxon>Nitrosomonadaceae</taxon>
        <taxon>Nitrosomonas</taxon>
    </lineage>
</organism>
<sequence>MVHPLFRHAEFYTTVNHIKDLPQATGVEIAFAGRSNAGKSSAINTLVGRGRFAFTSKTPGRTQHINFFQLGEERFMVDLPGYGYAQVPLAIRQHWVHLLSTYLQTRQALYGMILIMDIRHPLTKLDLQMLEWFAQTGKLVHVLLTKADKLSRSKALAVLDEIRQFLSTSYSGCTVQIFSSLTSEGAEEASRLLQDWFDEGGARVQQLNDSEISNQKKTPAKGD</sequence>
<feature type="chain" id="PRO_1000005834" description="Probable GTP-binding protein EngB">
    <location>
        <begin position="1"/>
        <end position="223"/>
    </location>
</feature>
<feature type="domain" description="EngB-type G" evidence="1">
    <location>
        <begin position="25"/>
        <end position="199"/>
    </location>
</feature>
<feature type="binding site" evidence="1">
    <location>
        <begin position="33"/>
        <end position="40"/>
    </location>
    <ligand>
        <name>GTP</name>
        <dbReference type="ChEBI" id="CHEBI:37565"/>
    </ligand>
</feature>
<feature type="binding site" evidence="1">
    <location>
        <position position="40"/>
    </location>
    <ligand>
        <name>Mg(2+)</name>
        <dbReference type="ChEBI" id="CHEBI:18420"/>
    </ligand>
</feature>
<feature type="binding site" evidence="1">
    <location>
        <begin position="60"/>
        <end position="64"/>
    </location>
    <ligand>
        <name>GTP</name>
        <dbReference type="ChEBI" id="CHEBI:37565"/>
    </ligand>
</feature>
<feature type="binding site" evidence="1">
    <location>
        <position position="62"/>
    </location>
    <ligand>
        <name>Mg(2+)</name>
        <dbReference type="ChEBI" id="CHEBI:18420"/>
    </ligand>
</feature>
<feature type="binding site" evidence="1">
    <location>
        <begin position="78"/>
        <end position="81"/>
    </location>
    <ligand>
        <name>GTP</name>
        <dbReference type="ChEBI" id="CHEBI:37565"/>
    </ligand>
</feature>
<feature type="binding site" evidence="1">
    <location>
        <begin position="145"/>
        <end position="148"/>
    </location>
    <ligand>
        <name>GTP</name>
        <dbReference type="ChEBI" id="CHEBI:37565"/>
    </ligand>
</feature>
<feature type="binding site" evidence="1">
    <location>
        <begin position="178"/>
        <end position="180"/>
    </location>
    <ligand>
        <name>GTP</name>
        <dbReference type="ChEBI" id="CHEBI:37565"/>
    </ligand>
</feature>
<reference key="1">
    <citation type="journal article" date="2007" name="Environ. Microbiol.">
        <title>Whole-genome analysis of the ammonia-oxidizing bacterium, Nitrosomonas eutropha C91: implications for niche adaptation.</title>
        <authorList>
            <person name="Stein L.Y."/>
            <person name="Arp D.J."/>
            <person name="Berube P.M."/>
            <person name="Chain P.S."/>
            <person name="Hauser L."/>
            <person name="Jetten M.S."/>
            <person name="Klotz M.G."/>
            <person name="Larimer F.W."/>
            <person name="Norton J.M."/>
            <person name="Op den Camp H.J.M."/>
            <person name="Shin M."/>
            <person name="Wei X."/>
        </authorList>
    </citation>
    <scope>NUCLEOTIDE SEQUENCE [LARGE SCALE GENOMIC DNA]</scope>
    <source>
        <strain>DSM 101675 / C91 / Nm57</strain>
    </source>
</reference>